<name>TEX55_HUMAN</name>
<proteinExistence type="evidence at protein level"/>
<comment type="interaction">
    <interactant intactId="EBI-25961624">
        <id>Q96M34</id>
    </interactant>
    <interactant intactId="EBI-466029">
        <id>P42858</id>
        <label>HTT</label>
    </interactant>
    <organismsDiffer>false</organismsDiffer>
    <experiments>3</experiments>
</comment>
<comment type="subcellular location">
    <subcellularLocation>
        <location evidence="1">Nucleus</location>
    </subcellularLocation>
    <subcellularLocation>
        <location evidence="6">Cell projection</location>
        <location evidence="6">Cilium</location>
        <location evidence="6">Flagellum</location>
    </subcellularLocation>
</comment>
<comment type="tissue specificity">
    <text evidence="5">Testis-specific.</text>
</comment>
<evidence type="ECO:0000250" key="1">
    <source>
        <dbReference type="UniProtKB" id="A6X8Z9"/>
    </source>
</evidence>
<evidence type="ECO:0000256" key="2">
    <source>
        <dbReference type="SAM" id="MobiDB-lite"/>
    </source>
</evidence>
<evidence type="ECO:0000269" key="3">
    <source>
    </source>
</evidence>
<evidence type="ECO:0000269" key="4">
    <source>
    </source>
</evidence>
<evidence type="ECO:0000269" key="5">
    <source>
    </source>
</evidence>
<evidence type="ECO:0000269" key="6">
    <source>
    </source>
</evidence>
<evidence type="ECO:0000303" key="7">
    <source>
    </source>
</evidence>
<evidence type="ECO:0000312" key="8">
    <source>
        <dbReference type="HGNC" id="HGNC:26553"/>
    </source>
</evidence>
<feature type="chain" id="PRO_0000254576" description="Testis-specific expressed protein 55">
    <location>
        <begin position="1"/>
        <end position="536"/>
    </location>
</feature>
<feature type="region of interest" description="Disordered" evidence="2">
    <location>
        <begin position="1"/>
        <end position="287"/>
    </location>
</feature>
<feature type="region of interest" description="Disordered" evidence="2">
    <location>
        <begin position="328"/>
        <end position="348"/>
    </location>
</feature>
<feature type="compositionally biased region" description="Low complexity" evidence="2">
    <location>
        <begin position="1"/>
        <end position="11"/>
    </location>
</feature>
<feature type="compositionally biased region" description="Basic and acidic residues" evidence="2">
    <location>
        <begin position="35"/>
        <end position="52"/>
    </location>
</feature>
<feature type="compositionally biased region" description="Polar residues" evidence="2">
    <location>
        <begin position="62"/>
        <end position="85"/>
    </location>
</feature>
<feature type="compositionally biased region" description="Polar residues" evidence="2">
    <location>
        <begin position="105"/>
        <end position="136"/>
    </location>
</feature>
<feature type="compositionally biased region" description="Basic and acidic residues" evidence="2">
    <location>
        <begin position="138"/>
        <end position="158"/>
    </location>
</feature>
<feature type="compositionally biased region" description="Basic and acidic residues" evidence="2">
    <location>
        <begin position="173"/>
        <end position="222"/>
    </location>
</feature>
<feature type="compositionally biased region" description="Low complexity" evidence="2">
    <location>
        <begin position="226"/>
        <end position="242"/>
    </location>
</feature>
<feature type="compositionally biased region" description="Polar residues" evidence="2">
    <location>
        <begin position="243"/>
        <end position="255"/>
    </location>
</feature>
<feature type="compositionally biased region" description="Basic and acidic residues" evidence="2">
    <location>
        <begin position="339"/>
        <end position="348"/>
    </location>
</feature>
<feature type="sequence variant" id="VAR_028841" description="In dbSNP:rs4687838.">
    <original>N</original>
    <variation>T</variation>
    <location>
        <position position="45"/>
    </location>
</feature>
<feature type="sequence variant" id="VAR_028842" description="In dbSNP:rs11550908.">
    <original>D</original>
    <variation>G</variation>
    <location>
        <position position="99"/>
    </location>
</feature>
<feature type="sequence variant" id="VAR_028843" description="In dbSNP:rs9859242.">
    <original>Q</original>
    <variation>H</variation>
    <location>
        <position position="193"/>
    </location>
</feature>
<feature type="sequence variant" id="VAR_028844" description="In dbSNP:rs4077930.">
    <original>G</original>
    <variation>S</variation>
    <location>
        <position position="312"/>
    </location>
</feature>
<feature type="sequence variant" id="VAR_061574" description="In dbSNP:rs56317615." evidence="3 4">
    <original>S</original>
    <variation>L</variation>
    <location>
        <position position="447"/>
    </location>
</feature>
<feature type="sequence variant" id="VAR_028845" description="In dbSNP:rs9289122.">
    <original>D</original>
    <variation>E</variation>
    <location>
        <position position="473"/>
    </location>
</feature>
<protein>
    <recommendedName>
        <fullName evidence="8">Testis-specific expressed protein 55</fullName>
    </recommendedName>
    <alternativeName>
        <fullName evidence="7">Testis-specific conserved, cAMP-dependent type II PK-anchoring protein</fullName>
    </alternativeName>
</protein>
<sequence>MEEPPQEALAEPLKHESPAAPSSAGHTKGQEEDDQKNQAERKADNHTAHRIADQTALRVPSQAESSIFSQATNGVAEQNGHSTPGQAGRRASNPADVSDLRADDQVNQTPSEQTKGKASSQANNVQHEQSDGQVSGLTEERTAEQTERRLPTQAERRTSGQIDGRLAMPSDQRGSRQTDHRMAGQSERRASEQMDRRMSGEAERRTSEQITHRLSKLSERRPSVQIDSGSSVPSDQSPSVQIDSGSSVPSDQRPSVQIDRRMSGKVRRRSSEKTDYRLAGLADPGTSEQTDLRLYGLVDHKTSVKTHHQVYGQATELAEHQAIDQAHSNADQPPVDNAHYTESDQTDHLADRQANHKDQLSYYETRGQSEDRIFPQLGNSKEDKEADYRVQPCKFEDSQVDLNSKPSVEMETQNATTIPPYNPVDARFTSNFQAKDQALFPRLPSISSKLNYTSSQEKTQAIVTKSDEFSEIDQGKGYHIRNQTYRRFPSIVYEDPYQVSLQYMEKHHILQIFQQITENLVYEKPEDPLNFMLCQV</sequence>
<gene>
    <name evidence="8" type="primary">TEX55</name>
    <name type="synonym">C3orf30</name>
    <name evidence="7" type="synonym">TSCPA</name>
</gene>
<organism>
    <name type="scientific">Homo sapiens</name>
    <name type="common">Human</name>
    <dbReference type="NCBI Taxonomy" id="9606"/>
    <lineage>
        <taxon>Eukaryota</taxon>
        <taxon>Metazoa</taxon>
        <taxon>Chordata</taxon>
        <taxon>Craniata</taxon>
        <taxon>Vertebrata</taxon>
        <taxon>Euteleostomi</taxon>
        <taxon>Mammalia</taxon>
        <taxon>Eutheria</taxon>
        <taxon>Euarchontoglires</taxon>
        <taxon>Primates</taxon>
        <taxon>Haplorrhini</taxon>
        <taxon>Catarrhini</taxon>
        <taxon>Hominidae</taxon>
        <taxon>Homo</taxon>
    </lineage>
</organism>
<reference key="1">
    <citation type="journal article" date="2004" name="Nat. Genet.">
        <title>Complete sequencing and characterization of 21,243 full-length human cDNAs.</title>
        <authorList>
            <person name="Ota T."/>
            <person name="Suzuki Y."/>
            <person name="Nishikawa T."/>
            <person name="Otsuki T."/>
            <person name="Sugiyama T."/>
            <person name="Irie R."/>
            <person name="Wakamatsu A."/>
            <person name="Hayashi K."/>
            <person name="Sato H."/>
            <person name="Nagai K."/>
            <person name="Kimura K."/>
            <person name="Makita H."/>
            <person name="Sekine M."/>
            <person name="Obayashi M."/>
            <person name="Nishi T."/>
            <person name="Shibahara T."/>
            <person name="Tanaka T."/>
            <person name="Ishii S."/>
            <person name="Yamamoto J."/>
            <person name="Saito K."/>
            <person name="Kawai Y."/>
            <person name="Isono Y."/>
            <person name="Nakamura Y."/>
            <person name="Nagahari K."/>
            <person name="Murakami K."/>
            <person name="Yasuda T."/>
            <person name="Iwayanagi T."/>
            <person name="Wagatsuma M."/>
            <person name="Shiratori A."/>
            <person name="Sudo H."/>
            <person name="Hosoiri T."/>
            <person name="Kaku Y."/>
            <person name="Kodaira H."/>
            <person name="Kondo H."/>
            <person name="Sugawara M."/>
            <person name="Takahashi M."/>
            <person name="Kanda K."/>
            <person name="Yokoi T."/>
            <person name="Furuya T."/>
            <person name="Kikkawa E."/>
            <person name="Omura Y."/>
            <person name="Abe K."/>
            <person name="Kamihara K."/>
            <person name="Katsuta N."/>
            <person name="Sato K."/>
            <person name="Tanikawa M."/>
            <person name="Yamazaki M."/>
            <person name="Ninomiya K."/>
            <person name="Ishibashi T."/>
            <person name="Yamashita H."/>
            <person name="Murakawa K."/>
            <person name="Fujimori K."/>
            <person name="Tanai H."/>
            <person name="Kimata M."/>
            <person name="Watanabe M."/>
            <person name="Hiraoka S."/>
            <person name="Chiba Y."/>
            <person name="Ishida S."/>
            <person name="Ono Y."/>
            <person name="Takiguchi S."/>
            <person name="Watanabe S."/>
            <person name="Yosida M."/>
            <person name="Hotuta T."/>
            <person name="Kusano J."/>
            <person name="Kanehori K."/>
            <person name="Takahashi-Fujii A."/>
            <person name="Hara H."/>
            <person name="Tanase T.-O."/>
            <person name="Nomura Y."/>
            <person name="Togiya S."/>
            <person name="Komai F."/>
            <person name="Hara R."/>
            <person name="Takeuchi K."/>
            <person name="Arita M."/>
            <person name="Imose N."/>
            <person name="Musashino K."/>
            <person name="Yuuki H."/>
            <person name="Oshima A."/>
            <person name="Sasaki N."/>
            <person name="Aotsuka S."/>
            <person name="Yoshikawa Y."/>
            <person name="Matsunawa H."/>
            <person name="Ichihara T."/>
            <person name="Shiohata N."/>
            <person name="Sano S."/>
            <person name="Moriya S."/>
            <person name="Momiyama H."/>
            <person name="Satoh N."/>
            <person name="Takami S."/>
            <person name="Terashima Y."/>
            <person name="Suzuki O."/>
            <person name="Nakagawa S."/>
            <person name="Senoh A."/>
            <person name="Mizoguchi H."/>
            <person name="Goto Y."/>
            <person name="Shimizu F."/>
            <person name="Wakebe H."/>
            <person name="Hishigaki H."/>
            <person name="Watanabe T."/>
            <person name="Sugiyama A."/>
            <person name="Takemoto M."/>
            <person name="Kawakami B."/>
            <person name="Yamazaki M."/>
            <person name="Watanabe K."/>
            <person name="Kumagai A."/>
            <person name="Itakura S."/>
            <person name="Fukuzumi Y."/>
            <person name="Fujimori Y."/>
            <person name="Komiyama M."/>
            <person name="Tashiro H."/>
            <person name="Tanigami A."/>
            <person name="Fujiwara T."/>
            <person name="Ono T."/>
            <person name="Yamada K."/>
            <person name="Fujii Y."/>
            <person name="Ozaki K."/>
            <person name="Hirao M."/>
            <person name="Ohmori Y."/>
            <person name="Kawabata A."/>
            <person name="Hikiji T."/>
            <person name="Kobatake N."/>
            <person name="Inagaki H."/>
            <person name="Ikema Y."/>
            <person name="Okamoto S."/>
            <person name="Okitani R."/>
            <person name="Kawakami T."/>
            <person name="Noguchi S."/>
            <person name="Itoh T."/>
            <person name="Shigeta K."/>
            <person name="Senba T."/>
            <person name="Matsumura K."/>
            <person name="Nakajima Y."/>
            <person name="Mizuno T."/>
            <person name="Morinaga M."/>
            <person name="Sasaki M."/>
            <person name="Togashi T."/>
            <person name="Oyama M."/>
            <person name="Hata H."/>
            <person name="Watanabe M."/>
            <person name="Komatsu T."/>
            <person name="Mizushima-Sugano J."/>
            <person name="Satoh T."/>
            <person name="Shirai Y."/>
            <person name="Takahashi Y."/>
            <person name="Nakagawa K."/>
            <person name="Okumura K."/>
            <person name="Nagase T."/>
            <person name="Nomura N."/>
            <person name="Kikuchi H."/>
            <person name="Masuho Y."/>
            <person name="Yamashita R."/>
            <person name="Nakai K."/>
            <person name="Yada T."/>
            <person name="Nakamura Y."/>
            <person name="Ohara O."/>
            <person name="Isogai T."/>
            <person name="Sugano S."/>
        </authorList>
    </citation>
    <scope>NUCLEOTIDE SEQUENCE [LARGE SCALE MRNA]</scope>
    <scope>VARIANT LEU-447</scope>
    <source>
        <tissue>Testis</tissue>
    </source>
</reference>
<reference key="2">
    <citation type="journal article" date="2006" name="Nature">
        <title>The DNA sequence, annotation and analysis of human chromosome 3.</title>
        <authorList>
            <person name="Muzny D.M."/>
            <person name="Scherer S.E."/>
            <person name="Kaul R."/>
            <person name="Wang J."/>
            <person name="Yu J."/>
            <person name="Sudbrak R."/>
            <person name="Buhay C.J."/>
            <person name="Chen R."/>
            <person name="Cree A."/>
            <person name="Ding Y."/>
            <person name="Dugan-Rocha S."/>
            <person name="Gill R."/>
            <person name="Gunaratne P."/>
            <person name="Harris R.A."/>
            <person name="Hawes A.C."/>
            <person name="Hernandez J."/>
            <person name="Hodgson A.V."/>
            <person name="Hume J."/>
            <person name="Jackson A."/>
            <person name="Khan Z.M."/>
            <person name="Kovar-Smith C."/>
            <person name="Lewis L.R."/>
            <person name="Lozado R.J."/>
            <person name="Metzker M.L."/>
            <person name="Milosavljevic A."/>
            <person name="Miner G.R."/>
            <person name="Morgan M.B."/>
            <person name="Nazareth L.V."/>
            <person name="Scott G."/>
            <person name="Sodergren E."/>
            <person name="Song X.-Z."/>
            <person name="Steffen D."/>
            <person name="Wei S."/>
            <person name="Wheeler D.A."/>
            <person name="Wright M.W."/>
            <person name="Worley K.C."/>
            <person name="Yuan Y."/>
            <person name="Zhang Z."/>
            <person name="Adams C.Q."/>
            <person name="Ansari-Lari M.A."/>
            <person name="Ayele M."/>
            <person name="Brown M.J."/>
            <person name="Chen G."/>
            <person name="Chen Z."/>
            <person name="Clendenning J."/>
            <person name="Clerc-Blankenburg K.P."/>
            <person name="Chen R."/>
            <person name="Chen Z."/>
            <person name="Davis C."/>
            <person name="Delgado O."/>
            <person name="Dinh H.H."/>
            <person name="Dong W."/>
            <person name="Draper H."/>
            <person name="Ernst S."/>
            <person name="Fu G."/>
            <person name="Gonzalez-Garay M.L."/>
            <person name="Garcia D.K."/>
            <person name="Gillett W."/>
            <person name="Gu J."/>
            <person name="Hao B."/>
            <person name="Haugen E."/>
            <person name="Havlak P."/>
            <person name="He X."/>
            <person name="Hennig S."/>
            <person name="Hu S."/>
            <person name="Huang W."/>
            <person name="Jackson L.R."/>
            <person name="Jacob L.S."/>
            <person name="Kelly S.H."/>
            <person name="Kube M."/>
            <person name="Levy R."/>
            <person name="Li Z."/>
            <person name="Liu B."/>
            <person name="Liu J."/>
            <person name="Liu W."/>
            <person name="Lu J."/>
            <person name="Maheshwari M."/>
            <person name="Nguyen B.-V."/>
            <person name="Okwuonu G.O."/>
            <person name="Palmeiri A."/>
            <person name="Pasternak S."/>
            <person name="Perez L.M."/>
            <person name="Phelps K.A."/>
            <person name="Plopper F.J."/>
            <person name="Qiang B."/>
            <person name="Raymond C."/>
            <person name="Rodriguez R."/>
            <person name="Saenphimmachak C."/>
            <person name="Santibanez J."/>
            <person name="Shen H."/>
            <person name="Shen Y."/>
            <person name="Subramanian S."/>
            <person name="Tabor P.E."/>
            <person name="Verduzco D."/>
            <person name="Waldron L."/>
            <person name="Wang J."/>
            <person name="Wang J."/>
            <person name="Wang Q."/>
            <person name="Williams G.A."/>
            <person name="Wong G.K.-S."/>
            <person name="Yao Z."/>
            <person name="Zhang J."/>
            <person name="Zhang X."/>
            <person name="Zhao G."/>
            <person name="Zhou J."/>
            <person name="Zhou Y."/>
            <person name="Nelson D."/>
            <person name="Lehrach H."/>
            <person name="Reinhardt R."/>
            <person name="Naylor S.L."/>
            <person name="Yang H."/>
            <person name="Olson M."/>
            <person name="Weinstock G."/>
            <person name="Gibbs R.A."/>
        </authorList>
    </citation>
    <scope>NUCLEOTIDE SEQUENCE [LARGE SCALE GENOMIC DNA]</scope>
</reference>
<reference key="3">
    <citation type="submission" date="2005-07" db="EMBL/GenBank/DDBJ databases">
        <authorList>
            <person name="Mural R.J."/>
            <person name="Istrail S."/>
            <person name="Sutton G.G."/>
            <person name="Florea L."/>
            <person name="Halpern A.L."/>
            <person name="Mobarry C.M."/>
            <person name="Lippert R."/>
            <person name="Walenz B."/>
            <person name="Shatkay H."/>
            <person name="Dew I."/>
            <person name="Miller J.R."/>
            <person name="Flanigan M.J."/>
            <person name="Edwards N.J."/>
            <person name="Bolanos R."/>
            <person name="Fasulo D."/>
            <person name="Halldorsson B.V."/>
            <person name="Hannenhalli S."/>
            <person name="Turner R."/>
            <person name="Yooseph S."/>
            <person name="Lu F."/>
            <person name="Nusskern D.R."/>
            <person name="Shue B.C."/>
            <person name="Zheng X.H."/>
            <person name="Zhong F."/>
            <person name="Delcher A.L."/>
            <person name="Huson D.H."/>
            <person name="Kravitz S.A."/>
            <person name="Mouchard L."/>
            <person name="Reinert K."/>
            <person name="Remington K.A."/>
            <person name="Clark A.G."/>
            <person name="Waterman M.S."/>
            <person name="Eichler E.E."/>
            <person name="Adams M.D."/>
            <person name="Hunkapiller M.W."/>
            <person name="Myers E.W."/>
            <person name="Venter J.C."/>
        </authorList>
    </citation>
    <scope>NUCLEOTIDE SEQUENCE [LARGE SCALE GENOMIC DNA]</scope>
</reference>
<reference key="4">
    <citation type="journal article" date="2004" name="Genome Res.">
        <title>The status, quality, and expansion of the NIH full-length cDNA project: the Mammalian Gene Collection (MGC).</title>
        <authorList>
            <consortium name="The MGC Project Team"/>
        </authorList>
    </citation>
    <scope>NUCLEOTIDE SEQUENCE [LARGE SCALE MRNA]</scope>
    <scope>VARIANT LEU-447</scope>
</reference>
<reference key="5">
    <citation type="journal article" date="2009" name="J. Huazhong Univ. Sci. Technol. Med. Sci.">
        <title>Expression profile of a novel germ cell-specific gene, TSCPA, in mice and human.</title>
        <authorList>
            <person name="Yu Z."/>
            <person name="Wu B."/>
            <person name="Tang A."/>
            <person name="Chen J."/>
            <person name="Guo X."/>
            <person name="Qin J."/>
            <person name="Gui Y."/>
            <person name="Cai Z."/>
        </authorList>
    </citation>
    <scope>TISSUE SPECIFICITY</scope>
</reference>
<reference key="6">
    <citation type="journal article" date="2019" name="J. Proteome Res.">
        <title>Cell Type-Specific Expression of Testis Elevated Genes Based on Transcriptomics and Antibody-Based Proteomics.</title>
        <authorList>
            <person name="Pineau C."/>
            <person name="Hikmet F."/>
            <person name="Zhang C."/>
            <person name="Oksvold P."/>
            <person name="Chen S."/>
            <person name="Fagerberg L."/>
            <person name="Uhlen M."/>
            <person name="Lindskog C."/>
        </authorList>
    </citation>
    <scope>SUBCELLULAR LOCATION</scope>
</reference>
<accession>Q96M34</accession>
<accession>A1L4B7</accession>
<keyword id="KW-0966">Cell projection</keyword>
<keyword id="KW-0969">Cilium</keyword>
<keyword id="KW-0282">Flagellum</keyword>
<keyword id="KW-0539">Nucleus</keyword>
<keyword id="KW-1267">Proteomics identification</keyword>
<keyword id="KW-1185">Reference proteome</keyword>
<dbReference type="EMBL" id="AK057421">
    <property type="protein sequence ID" value="BAB71478.1"/>
    <property type="molecule type" value="mRNA"/>
</dbReference>
<dbReference type="EMBL" id="AC083800">
    <property type="status" value="NOT_ANNOTATED_CDS"/>
    <property type="molecule type" value="Genomic_DNA"/>
</dbReference>
<dbReference type="EMBL" id="CH471052">
    <property type="protein sequence ID" value="EAW79578.1"/>
    <property type="molecule type" value="Genomic_DNA"/>
</dbReference>
<dbReference type="EMBL" id="BC130475">
    <property type="protein sequence ID" value="AAI30476.1"/>
    <property type="molecule type" value="mRNA"/>
</dbReference>
<dbReference type="CCDS" id="CCDS2984.1"/>
<dbReference type="RefSeq" id="NP_689752.2">
    <property type="nucleotide sequence ID" value="NM_152539.3"/>
</dbReference>
<dbReference type="BioGRID" id="127446">
    <property type="interactions" value="1"/>
</dbReference>
<dbReference type="FunCoup" id="Q96M34">
    <property type="interactions" value="84"/>
</dbReference>
<dbReference type="IntAct" id="Q96M34">
    <property type="interactions" value="1"/>
</dbReference>
<dbReference type="STRING" id="9606.ENSP00000295622"/>
<dbReference type="GlyGen" id="Q96M34">
    <property type="glycosylation" value="1 site, 1 O-linked glycan (1 site)"/>
</dbReference>
<dbReference type="iPTMnet" id="Q96M34"/>
<dbReference type="PhosphoSitePlus" id="Q96M34"/>
<dbReference type="BioMuta" id="C3orf30"/>
<dbReference type="DMDM" id="296434424"/>
<dbReference type="MassIVE" id="Q96M34"/>
<dbReference type="PaxDb" id="9606-ENSP00000295622"/>
<dbReference type="PeptideAtlas" id="Q96M34"/>
<dbReference type="ProteomicsDB" id="77291"/>
<dbReference type="Antibodypedia" id="68372">
    <property type="antibodies" value="32 antibodies from 9 providers"/>
</dbReference>
<dbReference type="DNASU" id="152405"/>
<dbReference type="Ensembl" id="ENST00000295622.6">
    <property type="protein sequence ID" value="ENSP00000295622.1"/>
    <property type="gene ID" value="ENSG00000163424.9"/>
</dbReference>
<dbReference type="GeneID" id="152405"/>
<dbReference type="KEGG" id="hsa:152405"/>
<dbReference type="MANE-Select" id="ENST00000295622.6">
    <property type="protein sequence ID" value="ENSP00000295622.1"/>
    <property type="RefSeq nucleotide sequence ID" value="NM_152539.3"/>
    <property type="RefSeq protein sequence ID" value="NP_689752.2"/>
</dbReference>
<dbReference type="UCSC" id="uc003ecb.1">
    <property type="organism name" value="human"/>
</dbReference>
<dbReference type="AGR" id="HGNC:26553"/>
<dbReference type="CTD" id="152405"/>
<dbReference type="DisGeNET" id="152405"/>
<dbReference type="GeneCards" id="TEX55"/>
<dbReference type="HGNC" id="HGNC:26553">
    <property type="gene designation" value="TEX55"/>
</dbReference>
<dbReference type="HPA" id="ENSG00000163424">
    <property type="expression patterns" value="Tissue enriched (testis)"/>
</dbReference>
<dbReference type="neXtProt" id="NX_Q96M34"/>
<dbReference type="OpenTargets" id="ENSG00000163424"/>
<dbReference type="PharmGKB" id="PA142672391"/>
<dbReference type="VEuPathDB" id="HostDB:ENSG00000163424"/>
<dbReference type="eggNOG" id="ENOG502QRWU">
    <property type="taxonomic scope" value="Eukaryota"/>
</dbReference>
<dbReference type="GeneTree" id="ENSGT00940000154487"/>
<dbReference type="HOGENOM" id="CLU_034619_0_0_1"/>
<dbReference type="InParanoid" id="Q96M34"/>
<dbReference type="OMA" id="QPCKFEP"/>
<dbReference type="OrthoDB" id="522106at2759"/>
<dbReference type="PAN-GO" id="Q96M34">
    <property type="GO annotations" value="1 GO annotation based on evolutionary models"/>
</dbReference>
<dbReference type="PhylomeDB" id="Q96M34"/>
<dbReference type="TreeFam" id="TF328421"/>
<dbReference type="PathwayCommons" id="Q96M34"/>
<dbReference type="SignaLink" id="Q96M34"/>
<dbReference type="BioGRID-ORCS" id="152405">
    <property type="hits" value="4 hits in 1121 CRISPR screens"/>
</dbReference>
<dbReference type="GenomeRNAi" id="152405"/>
<dbReference type="Pharos" id="Q96M34">
    <property type="development level" value="Tdark"/>
</dbReference>
<dbReference type="PRO" id="PR:Q96M34"/>
<dbReference type="Proteomes" id="UP000005640">
    <property type="component" value="Chromosome 3"/>
</dbReference>
<dbReference type="RNAct" id="Q96M34">
    <property type="molecule type" value="protein"/>
</dbReference>
<dbReference type="Bgee" id="ENSG00000163424">
    <property type="expression patterns" value="Expressed in left testis and 23 other cell types or tissues"/>
</dbReference>
<dbReference type="ExpressionAtlas" id="Q96M34">
    <property type="expression patterns" value="baseline and differential"/>
</dbReference>
<dbReference type="GO" id="GO:0005634">
    <property type="term" value="C:nucleus"/>
    <property type="evidence" value="ECO:0000250"/>
    <property type="project" value="UniProtKB"/>
</dbReference>
<dbReference type="GO" id="GO:0036126">
    <property type="term" value="C:sperm flagellum"/>
    <property type="evidence" value="ECO:0000314"/>
    <property type="project" value="UniProtKB"/>
</dbReference>
<dbReference type="CDD" id="cd22975">
    <property type="entry name" value="DD_TEX55"/>
    <property type="match status" value="1"/>
</dbReference>
<dbReference type="InterPro" id="IPR040760">
    <property type="entry name" value="Tex55"/>
</dbReference>
<dbReference type="InterPro" id="IPR048377">
    <property type="entry name" value="TEX55_DD"/>
</dbReference>
<dbReference type="PANTHER" id="PTHR47110">
    <property type="entry name" value="TESTIS-SPECIFIC EXPRESSED PROTEIN 55"/>
    <property type="match status" value="1"/>
</dbReference>
<dbReference type="PANTHER" id="PTHR47110:SF1">
    <property type="entry name" value="TESTIS-SPECIFIC EXPRESSED PROTEIN 55"/>
    <property type="match status" value="1"/>
</dbReference>
<dbReference type="Pfam" id="PF17819">
    <property type="entry name" value="Tex55"/>
    <property type="match status" value="1"/>
</dbReference>
<dbReference type="SUPFAM" id="SSF47391">
    <property type="entry name" value="Dimerization-anchoring domain of cAMP-dependent PK regulatory subunit"/>
    <property type="match status" value="1"/>
</dbReference>